<feature type="chain" id="PRO_1000187521" description="Chromosome partition protein MukF">
    <location>
        <begin position="1"/>
        <end position="440"/>
    </location>
</feature>
<feature type="region of interest" description="Leucine-zipper">
    <location>
        <begin position="208"/>
        <end position="236"/>
    </location>
</feature>
<sequence>MSEFSQTVPELVAWARKNDFSISLPVDRLSFLLAVATLNGERLDGEMSEGELVDAFRHVSDAFEQTSETIGVRANNAINDMVRQRLLNRFTSEQAEGNAIYRLTPLGIGITDYYIRQREFSTLRLSMQLSIVAGELKRAADAAEEGGDEFHWHRNVYAPLKYSVAEIFDSIDLTQRLMDEQQQQVKDDIAQLLNKDWRAAISSCELLLSETSGTLRELQDTLEAAGDKLQANLLRIQDATMPHDDLHFVDRLVFDLQSKLDRIISWGQQSIDLWIGYDRHVHKFIRTAIDMDKNRVFAQRLRQSVQTYFDEPWALTYANADRLLDMRDEEMALRDEEVTGELPEDLEYEEFNEIREQLAAIIEEQLAVYKTRQVPLDLGLVVREYLSQYPRARHFDVARIVIDQAVRLGVAQADFTGLPAKWQPINDYGAKVQAHVIDKY</sequence>
<organism>
    <name type="scientific">Shigella boydii serotype 18 (strain CDC 3083-94 / BS512)</name>
    <dbReference type="NCBI Taxonomy" id="344609"/>
    <lineage>
        <taxon>Bacteria</taxon>
        <taxon>Pseudomonadati</taxon>
        <taxon>Pseudomonadota</taxon>
        <taxon>Gammaproteobacteria</taxon>
        <taxon>Enterobacterales</taxon>
        <taxon>Enterobacteriaceae</taxon>
        <taxon>Shigella</taxon>
    </lineage>
</organism>
<protein>
    <recommendedName>
        <fullName evidence="1">Chromosome partition protein MukF</fullName>
    </recommendedName>
</protein>
<proteinExistence type="inferred from homology"/>
<evidence type="ECO:0000255" key="1">
    <source>
        <dbReference type="HAMAP-Rule" id="MF_01803"/>
    </source>
</evidence>
<name>MUKF_SHIB3</name>
<dbReference type="EMBL" id="CP001063">
    <property type="protein sequence ID" value="ACD07700.1"/>
    <property type="molecule type" value="Genomic_DNA"/>
</dbReference>
<dbReference type="RefSeq" id="WP_001288841.1">
    <property type="nucleotide sequence ID" value="NC_010658.1"/>
</dbReference>
<dbReference type="SMR" id="B2TUF7"/>
<dbReference type="STRING" id="344609.SbBS512_E2402"/>
<dbReference type="KEGG" id="sbc:SbBS512_E2402"/>
<dbReference type="HOGENOM" id="CLU_049853_0_0_6"/>
<dbReference type="Proteomes" id="UP000001030">
    <property type="component" value="Chromosome"/>
</dbReference>
<dbReference type="GO" id="GO:0005737">
    <property type="term" value="C:cytoplasm"/>
    <property type="evidence" value="ECO:0007669"/>
    <property type="project" value="UniProtKB-UniRule"/>
</dbReference>
<dbReference type="GO" id="GO:0009295">
    <property type="term" value="C:nucleoid"/>
    <property type="evidence" value="ECO:0007669"/>
    <property type="project" value="UniProtKB-SubCell"/>
</dbReference>
<dbReference type="GO" id="GO:0005509">
    <property type="term" value="F:calcium ion binding"/>
    <property type="evidence" value="ECO:0007669"/>
    <property type="project" value="UniProtKB-UniRule"/>
</dbReference>
<dbReference type="GO" id="GO:0051301">
    <property type="term" value="P:cell division"/>
    <property type="evidence" value="ECO:0007669"/>
    <property type="project" value="UniProtKB-KW"/>
</dbReference>
<dbReference type="GO" id="GO:0030261">
    <property type="term" value="P:chromosome condensation"/>
    <property type="evidence" value="ECO:0007669"/>
    <property type="project" value="UniProtKB-KW"/>
</dbReference>
<dbReference type="GO" id="GO:0007059">
    <property type="term" value="P:chromosome segregation"/>
    <property type="evidence" value="ECO:0007669"/>
    <property type="project" value="UniProtKB-UniRule"/>
</dbReference>
<dbReference type="GO" id="GO:0006260">
    <property type="term" value="P:DNA replication"/>
    <property type="evidence" value="ECO:0007669"/>
    <property type="project" value="UniProtKB-UniRule"/>
</dbReference>
<dbReference type="CDD" id="cd16337">
    <property type="entry name" value="MukF_C"/>
    <property type="match status" value="1"/>
</dbReference>
<dbReference type="CDD" id="cd16335">
    <property type="entry name" value="MukF_N"/>
    <property type="match status" value="1"/>
</dbReference>
<dbReference type="Gene3D" id="1.20.58.590">
    <property type="entry name" value="Chromosome partition protein MukF, middle domain"/>
    <property type="match status" value="1"/>
</dbReference>
<dbReference type="Gene3D" id="1.10.225.40">
    <property type="entry name" value="MukF, C-terminal domain"/>
    <property type="match status" value="1"/>
</dbReference>
<dbReference type="Gene3D" id="1.10.10.10">
    <property type="entry name" value="Winged helix-like DNA-binding domain superfamily/Winged helix DNA-binding domain"/>
    <property type="match status" value="1"/>
</dbReference>
<dbReference type="HAMAP" id="MF_01803">
    <property type="entry name" value="MukF"/>
    <property type="match status" value="1"/>
</dbReference>
<dbReference type="InterPro" id="IPR005582">
    <property type="entry name" value="Chromosome_partition_MukF"/>
</dbReference>
<dbReference type="InterPro" id="IPR033441">
    <property type="entry name" value="MukF_C"/>
</dbReference>
<dbReference type="InterPro" id="IPR038198">
    <property type="entry name" value="MukF_C_sf"/>
</dbReference>
<dbReference type="InterPro" id="IPR033440">
    <property type="entry name" value="MukF_M"/>
</dbReference>
<dbReference type="InterPro" id="IPR036141">
    <property type="entry name" value="MukF_M_sp"/>
</dbReference>
<dbReference type="InterPro" id="IPR033439">
    <property type="entry name" value="MukF_WHTH"/>
</dbReference>
<dbReference type="InterPro" id="IPR036388">
    <property type="entry name" value="WH-like_DNA-bd_sf"/>
</dbReference>
<dbReference type="InterPro" id="IPR036390">
    <property type="entry name" value="WH_DNA-bd_sf"/>
</dbReference>
<dbReference type="NCBIfam" id="NF003615">
    <property type="entry name" value="PRK05260.1"/>
    <property type="match status" value="1"/>
</dbReference>
<dbReference type="Pfam" id="PF03882">
    <property type="entry name" value="KicB"/>
    <property type="match status" value="1"/>
</dbReference>
<dbReference type="Pfam" id="PF17193">
    <property type="entry name" value="MukF_C"/>
    <property type="match status" value="1"/>
</dbReference>
<dbReference type="Pfam" id="PF17192">
    <property type="entry name" value="MukF_M"/>
    <property type="match status" value="1"/>
</dbReference>
<dbReference type="PIRSF" id="PIRSF018282">
    <property type="entry name" value="MukF"/>
    <property type="match status" value="1"/>
</dbReference>
<dbReference type="SUPFAM" id="SSF140570">
    <property type="entry name" value="MukF C-terminal domain-like"/>
    <property type="match status" value="1"/>
</dbReference>
<dbReference type="SUPFAM" id="SSF46785">
    <property type="entry name" value="Winged helix' DNA-binding domain"/>
    <property type="match status" value="1"/>
</dbReference>
<keyword id="KW-0106">Calcium</keyword>
<keyword id="KW-0131">Cell cycle</keyword>
<keyword id="KW-0132">Cell division</keyword>
<keyword id="KW-0159">Chromosome partition</keyword>
<keyword id="KW-0963">Cytoplasm</keyword>
<keyword id="KW-0226">DNA condensation</keyword>
<keyword id="KW-1185">Reference proteome</keyword>
<gene>
    <name evidence="1" type="primary">mukF</name>
    <name type="ordered locus">SbBS512_E2402</name>
</gene>
<comment type="function">
    <text evidence="1">Involved in chromosome condensation, segregation and cell cycle progression. May participate in facilitating chromosome segregation by condensation DNA from both sides of a centrally located replisome during cell division. Not required for mini-F plasmid partitioning. Probably acts via its interaction with MukB and MukE. Overexpression results in anucleate cells. It has a calcium binding activity.</text>
</comment>
<comment type="subunit">
    <text evidence="1">Interacts, and probably forms a ternary complex, with MukE and MukB via its C-terminal region. The complex formation is stimulated by calcium or magnesium. It is required for an interaction between MukE and MukB.</text>
</comment>
<comment type="subcellular location">
    <subcellularLocation>
        <location evidence="1">Cytoplasm</location>
        <location evidence="1">Nucleoid</location>
    </subcellularLocation>
    <text evidence="1">Restricted to the nucleoid region.</text>
</comment>
<comment type="similarity">
    <text evidence="1">Belongs to the MukF family.</text>
</comment>
<accession>B2TUF7</accession>
<reference key="1">
    <citation type="submission" date="2008-05" db="EMBL/GenBank/DDBJ databases">
        <title>Complete sequence of Shigella boydii serotype 18 strain BS512.</title>
        <authorList>
            <person name="Rasko D.A."/>
            <person name="Rosovitz M."/>
            <person name="Maurelli A.T."/>
            <person name="Myers G."/>
            <person name="Seshadri R."/>
            <person name="Cer R."/>
            <person name="Jiang L."/>
            <person name="Ravel J."/>
            <person name="Sebastian Y."/>
        </authorList>
    </citation>
    <scope>NUCLEOTIDE SEQUENCE [LARGE SCALE GENOMIC DNA]</scope>
    <source>
        <strain>CDC 3083-94 / BS512</strain>
    </source>
</reference>